<comment type="function">
    <text>Crystallins are the dominant structural components of the vertebrate eye lens.</text>
</comment>
<comment type="domain">
    <text>Has a two-domain beta-structure, folded into four very similar Greek key motifs.</text>
</comment>
<comment type="similarity">
    <text evidence="2">Belongs to the beta/gamma-crystallin family.</text>
</comment>
<keyword id="KW-0273">Eye lens protein</keyword>
<keyword id="KW-1185">Reference proteome</keyword>
<keyword id="KW-0677">Repeat</keyword>
<sequence>MGRIIFYEDKNFQGRRYECDSDCSDFHAFLNRCNSIRVESGAWVIYERPNFMGYQYVLTRGEYPDYQRWMGLNDRLCSCKMIHFVSGSEYKIQLYDKGDFTGQVYESTEDCPSVVDRFRTREVHSCKVLDGIWIFYEHPNYRGRQYLLEKGEYRKPVDWGAVCPTVQSFKRLME</sequence>
<accession>P10112</accession>
<proteinExistence type="evidence at transcript level"/>
<reference key="1">
    <citation type="journal article" date="1987" name="Biochim. Biophys. Acta">
        <title>Cloning and sequencing of a carp beta s-crystallin cDNA.</title>
        <authorList>
            <person name="Chang T."/>
            <person name="Chang W.-C."/>
        </authorList>
    </citation>
    <scope>NUCLEOTIDE SEQUENCE [MRNA]</scope>
    <source>
        <tissue>Lens</tissue>
    </source>
</reference>
<feature type="initiator methionine" description="Removed">
    <location>
        <position position="1"/>
    </location>
</feature>
<feature type="chain" id="PRO_0000057567" description="Gamma-crystallin S">
    <location>
        <begin position="2"/>
        <end position="174"/>
    </location>
</feature>
<feature type="domain" description="Beta/gamma crystallin 'Greek key' 1" evidence="1">
    <location>
        <begin position="2"/>
        <end position="40"/>
    </location>
</feature>
<feature type="domain" description="Beta/gamma crystallin 'Greek key' 2" evidence="1">
    <location>
        <begin position="41"/>
        <end position="83"/>
    </location>
</feature>
<feature type="domain" description="Beta/gamma crystallin 'Greek key' 3" evidence="1">
    <location>
        <begin position="90"/>
        <end position="130"/>
    </location>
</feature>
<feature type="domain" description="Beta/gamma crystallin 'Greek key' 4" evidence="1">
    <location>
        <begin position="131"/>
        <end position="173"/>
    </location>
</feature>
<feature type="region of interest" description="Connecting peptide">
    <location>
        <begin position="84"/>
        <end position="89"/>
    </location>
</feature>
<dbReference type="EMBL" id="M26834">
    <property type="protein sequence ID" value="AAA49206.1"/>
    <property type="molecule type" value="mRNA"/>
</dbReference>
<dbReference type="PIR" id="S07146">
    <property type="entry name" value="S07146"/>
</dbReference>
<dbReference type="SMR" id="P10112"/>
<dbReference type="Ensembl" id="ENSCCRT00010022094.1">
    <property type="protein sequence ID" value="ENSCCRP00010020178.1"/>
    <property type="gene ID" value="ENSCCRG00010008758.1"/>
</dbReference>
<dbReference type="Ensembl" id="ENSCCRT00015121669.1">
    <property type="protein sequence ID" value="ENSCCRP00015117933.1"/>
    <property type="gene ID" value="ENSCCRG00015046516.1"/>
</dbReference>
<dbReference type="Ensembl" id="ENSCCRT00020047360.1">
    <property type="protein sequence ID" value="ENSCCRP00020043412.1"/>
    <property type="gene ID" value="ENSCCRG00020019296.1"/>
</dbReference>
<dbReference type="GeneID" id="109079486"/>
<dbReference type="KEGG" id="ccar:109079486"/>
<dbReference type="OMA" id="MEQFHIR"/>
<dbReference type="OrthoDB" id="8407241at2759"/>
<dbReference type="Proteomes" id="UP000694384">
    <property type="component" value="Unplaced"/>
</dbReference>
<dbReference type="Proteomes" id="UP000694427">
    <property type="component" value="Unplaced"/>
</dbReference>
<dbReference type="Proteomes" id="UP000694700">
    <property type="component" value="Unplaced"/>
</dbReference>
<dbReference type="Proteomes" id="UP000694701">
    <property type="component" value="Unplaced"/>
</dbReference>
<dbReference type="Proteomes" id="UP001155660">
    <property type="component" value="Chromosome A22"/>
</dbReference>
<dbReference type="GO" id="GO:0005212">
    <property type="term" value="F:structural constituent of eye lens"/>
    <property type="evidence" value="ECO:0007669"/>
    <property type="project" value="UniProtKB-KW"/>
</dbReference>
<dbReference type="GO" id="GO:0002088">
    <property type="term" value="P:lens development in camera-type eye"/>
    <property type="evidence" value="ECO:0007669"/>
    <property type="project" value="TreeGrafter"/>
</dbReference>
<dbReference type="GO" id="GO:0007601">
    <property type="term" value="P:visual perception"/>
    <property type="evidence" value="ECO:0007669"/>
    <property type="project" value="TreeGrafter"/>
</dbReference>
<dbReference type="FunFam" id="2.60.20.10:FF:000001">
    <property type="entry name" value="Crystallin gamma S"/>
    <property type="match status" value="1"/>
</dbReference>
<dbReference type="FunFam" id="2.60.20.10:FF:000003">
    <property type="entry name" value="Crystallin gamma S"/>
    <property type="match status" value="1"/>
</dbReference>
<dbReference type="Gene3D" id="2.60.20.10">
    <property type="entry name" value="Crystallins"/>
    <property type="match status" value="2"/>
</dbReference>
<dbReference type="InterPro" id="IPR050252">
    <property type="entry name" value="Beta/Gamma-Crystallin"/>
</dbReference>
<dbReference type="InterPro" id="IPR001064">
    <property type="entry name" value="Beta/gamma_crystallin"/>
</dbReference>
<dbReference type="InterPro" id="IPR011024">
    <property type="entry name" value="G_crystallin-like"/>
</dbReference>
<dbReference type="PANTHER" id="PTHR11818">
    <property type="entry name" value="BETA/GAMMA CRYSTALLIN"/>
    <property type="match status" value="1"/>
</dbReference>
<dbReference type="PANTHER" id="PTHR11818:SF6">
    <property type="entry name" value="GAMMA-CRYSTALLIN S"/>
    <property type="match status" value="1"/>
</dbReference>
<dbReference type="Pfam" id="PF00030">
    <property type="entry name" value="Crystall"/>
    <property type="match status" value="2"/>
</dbReference>
<dbReference type="PRINTS" id="PR01367">
    <property type="entry name" value="BGCRYSTALLIN"/>
</dbReference>
<dbReference type="SMART" id="SM00247">
    <property type="entry name" value="XTALbg"/>
    <property type="match status" value="2"/>
</dbReference>
<dbReference type="SUPFAM" id="SSF49695">
    <property type="entry name" value="gamma-Crystallin-like"/>
    <property type="match status" value="1"/>
</dbReference>
<dbReference type="PROSITE" id="PS50915">
    <property type="entry name" value="CRYSTALLIN_BETA_GAMMA"/>
    <property type="match status" value="4"/>
</dbReference>
<organism>
    <name type="scientific">Cyprinus carpio</name>
    <name type="common">Common carp</name>
    <dbReference type="NCBI Taxonomy" id="7962"/>
    <lineage>
        <taxon>Eukaryota</taxon>
        <taxon>Metazoa</taxon>
        <taxon>Chordata</taxon>
        <taxon>Craniata</taxon>
        <taxon>Vertebrata</taxon>
        <taxon>Euteleostomi</taxon>
        <taxon>Actinopterygii</taxon>
        <taxon>Neopterygii</taxon>
        <taxon>Teleostei</taxon>
        <taxon>Ostariophysi</taxon>
        <taxon>Cypriniformes</taxon>
        <taxon>Cyprinidae</taxon>
        <taxon>Cyprininae</taxon>
        <taxon>Cyprinus</taxon>
    </lineage>
</organism>
<evidence type="ECO:0000255" key="1">
    <source>
        <dbReference type="PROSITE-ProRule" id="PRU00028"/>
    </source>
</evidence>
<evidence type="ECO:0000305" key="2"/>
<protein>
    <recommendedName>
        <fullName>Gamma-crystallin S</fullName>
    </recommendedName>
    <alternativeName>
        <fullName>Beta-crystallin S</fullName>
    </alternativeName>
    <alternativeName>
        <fullName>Gamma-S-crystallin</fullName>
    </alternativeName>
</protein>
<name>CRYGS_CYPCA</name>
<gene>
    <name type="primary">crygs</name>
</gene>